<name>RIBB_TOLAT</name>
<keyword id="KW-0456">Lyase</keyword>
<keyword id="KW-0460">Magnesium</keyword>
<keyword id="KW-0464">Manganese</keyword>
<keyword id="KW-0479">Metal-binding</keyword>
<keyword id="KW-1185">Reference proteome</keyword>
<keyword id="KW-0686">Riboflavin biosynthesis</keyword>
<proteinExistence type="inferred from homology"/>
<feature type="chain" id="PRO_1000203823" description="3,4-dihydroxy-2-butanone 4-phosphate synthase">
    <location>
        <begin position="1"/>
        <end position="217"/>
    </location>
</feature>
<feature type="binding site" evidence="1">
    <location>
        <begin position="37"/>
        <end position="38"/>
    </location>
    <ligand>
        <name>D-ribulose 5-phosphate</name>
        <dbReference type="ChEBI" id="CHEBI:58121"/>
    </ligand>
</feature>
<feature type="binding site" evidence="1">
    <location>
        <position position="38"/>
    </location>
    <ligand>
        <name>Mg(2+)</name>
        <dbReference type="ChEBI" id="CHEBI:18420"/>
        <label>1</label>
    </ligand>
</feature>
<feature type="binding site" evidence="1">
    <location>
        <position position="38"/>
    </location>
    <ligand>
        <name>Mg(2+)</name>
        <dbReference type="ChEBI" id="CHEBI:18420"/>
        <label>2</label>
    </ligand>
</feature>
<feature type="binding site" evidence="1">
    <location>
        <position position="42"/>
    </location>
    <ligand>
        <name>D-ribulose 5-phosphate</name>
        <dbReference type="ChEBI" id="CHEBI:58121"/>
    </ligand>
</feature>
<feature type="binding site" evidence="1">
    <location>
        <begin position="150"/>
        <end position="154"/>
    </location>
    <ligand>
        <name>D-ribulose 5-phosphate</name>
        <dbReference type="ChEBI" id="CHEBI:58121"/>
    </ligand>
</feature>
<feature type="binding site" evidence="1">
    <location>
        <position position="153"/>
    </location>
    <ligand>
        <name>Mg(2+)</name>
        <dbReference type="ChEBI" id="CHEBI:18420"/>
        <label>2</label>
    </ligand>
</feature>
<feature type="binding site" evidence="1">
    <location>
        <position position="174"/>
    </location>
    <ligand>
        <name>D-ribulose 5-phosphate</name>
        <dbReference type="ChEBI" id="CHEBI:58121"/>
    </ligand>
</feature>
<feature type="site" description="Essential for catalytic activity" evidence="1">
    <location>
        <position position="136"/>
    </location>
</feature>
<feature type="site" description="Essential for catalytic activity" evidence="1">
    <location>
        <position position="174"/>
    </location>
</feature>
<evidence type="ECO:0000255" key="1">
    <source>
        <dbReference type="HAMAP-Rule" id="MF_00180"/>
    </source>
</evidence>
<comment type="function">
    <text evidence="1">Catalyzes the conversion of D-ribulose 5-phosphate to formate and 3,4-dihydroxy-2-butanone 4-phosphate.</text>
</comment>
<comment type="catalytic activity">
    <reaction evidence="1">
        <text>D-ribulose 5-phosphate = (2S)-2-hydroxy-3-oxobutyl phosphate + formate + H(+)</text>
        <dbReference type="Rhea" id="RHEA:18457"/>
        <dbReference type="ChEBI" id="CHEBI:15378"/>
        <dbReference type="ChEBI" id="CHEBI:15740"/>
        <dbReference type="ChEBI" id="CHEBI:58121"/>
        <dbReference type="ChEBI" id="CHEBI:58830"/>
        <dbReference type="EC" id="4.1.99.12"/>
    </reaction>
</comment>
<comment type="cofactor">
    <cofactor evidence="1">
        <name>Mg(2+)</name>
        <dbReference type="ChEBI" id="CHEBI:18420"/>
    </cofactor>
    <cofactor evidence="1">
        <name>Mn(2+)</name>
        <dbReference type="ChEBI" id="CHEBI:29035"/>
    </cofactor>
    <text evidence="1">Binds 2 divalent metal cations per subunit. Magnesium or manganese.</text>
</comment>
<comment type="pathway">
    <text evidence="1">Cofactor biosynthesis; riboflavin biosynthesis; 2-hydroxy-3-oxobutyl phosphate from D-ribulose 5-phosphate: step 1/1.</text>
</comment>
<comment type="subunit">
    <text evidence="1">Homodimer.</text>
</comment>
<comment type="similarity">
    <text evidence="1">Belongs to the DHBP synthase family.</text>
</comment>
<reference key="1">
    <citation type="submission" date="2009-05" db="EMBL/GenBank/DDBJ databases">
        <title>Complete sequence of Tolumonas auensis DSM 9187.</title>
        <authorList>
            <consortium name="US DOE Joint Genome Institute"/>
            <person name="Lucas S."/>
            <person name="Copeland A."/>
            <person name="Lapidus A."/>
            <person name="Glavina del Rio T."/>
            <person name="Tice H."/>
            <person name="Bruce D."/>
            <person name="Goodwin L."/>
            <person name="Pitluck S."/>
            <person name="Chertkov O."/>
            <person name="Brettin T."/>
            <person name="Detter J.C."/>
            <person name="Han C."/>
            <person name="Larimer F."/>
            <person name="Land M."/>
            <person name="Hauser L."/>
            <person name="Kyrpides N."/>
            <person name="Mikhailova N."/>
            <person name="Spring S."/>
            <person name="Beller H."/>
        </authorList>
    </citation>
    <scope>NUCLEOTIDE SEQUENCE [LARGE SCALE GENOMIC DNA]</scope>
    <source>
        <strain>DSM 9187 / NBRC 110442 / TA 4</strain>
    </source>
</reference>
<gene>
    <name evidence="1" type="primary">ribB</name>
    <name type="ordered locus">Tola_1102</name>
</gene>
<organism>
    <name type="scientific">Tolumonas auensis (strain DSM 9187 / NBRC 110442 / TA 4)</name>
    <dbReference type="NCBI Taxonomy" id="595494"/>
    <lineage>
        <taxon>Bacteria</taxon>
        <taxon>Pseudomonadati</taxon>
        <taxon>Pseudomonadota</taxon>
        <taxon>Gammaproteobacteria</taxon>
        <taxon>Aeromonadales</taxon>
        <taxon>Aeromonadaceae</taxon>
        <taxon>Tolumonas</taxon>
    </lineage>
</organism>
<sequence>MNQSLLTPFGNPFQRVEQALSALQQGNGVLVVDDEDRENEGDLIFSAEKMTPQQMALMIRECSGIVCLCLTEERIRQLALPMMVEHNTSANQTGFTVTIEAARGVTTGVSAQDRITTIRTAIADGAVASDLNRPGHVFPLRARAGGVLTRRGHTEATIDLMKLAGLKPYGVLCEVQNEDGSMARLPGIVEFANKHNMPVLCIEDLVAYLTENAKAAG</sequence>
<protein>
    <recommendedName>
        <fullName evidence="1">3,4-dihydroxy-2-butanone 4-phosphate synthase</fullName>
        <shortName evidence="1">DHBP synthase</shortName>
        <ecNumber evidence="1">4.1.99.12</ecNumber>
    </recommendedName>
</protein>
<accession>C4LDD2</accession>
<dbReference type="EC" id="4.1.99.12" evidence="1"/>
<dbReference type="EMBL" id="CP001616">
    <property type="protein sequence ID" value="ACQ92728.1"/>
    <property type="molecule type" value="Genomic_DNA"/>
</dbReference>
<dbReference type="RefSeq" id="WP_012729327.1">
    <property type="nucleotide sequence ID" value="NC_012691.1"/>
</dbReference>
<dbReference type="SMR" id="C4LDD2"/>
<dbReference type="STRING" id="595494.Tola_1102"/>
<dbReference type="KEGG" id="tau:Tola_1102"/>
<dbReference type="eggNOG" id="COG0108">
    <property type="taxonomic scope" value="Bacteria"/>
</dbReference>
<dbReference type="HOGENOM" id="CLU_020273_3_0_6"/>
<dbReference type="OrthoDB" id="9793111at2"/>
<dbReference type="UniPathway" id="UPA00275">
    <property type="reaction ID" value="UER00399"/>
</dbReference>
<dbReference type="Proteomes" id="UP000009073">
    <property type="component" value="Chromosome"/>
</dbReference>
<dbReference type="GO" id="GO:0005829">
    <property type="term" value="C:cytosol"/>
    <property type="evidence" value="ECO:0007669"/>
    <property type="project" value="TreeGrafter"/>
</dbReference>
<dbReference type="GO" id="GO:0008686">
    <property type="term" value="F:3,4-dihydroxy-2-butanone-4-phosphate synthase activity"/>
    <property type="evidence" value="ECO:0007669"/>
    <property type="project" value="UniProtKB-UniRule"/>
</dbReference>
<dbReference type="GO" id="GO:0000287">
    <property type="term" value="F:magnesium ion binding"/>
    <property type="evidence" value="ECO:0007669"/>
    <property type="project" value="UniProtKB-UniRule"/>
</dbReference>
<dbReference type="GO" id="GO:0030145">
    <property type="term" value="F:manganese ion binding"/>
    <property type="evidence" value="ECO:0007669"/>
    <property type="project" value="UniProtKB-UniRule"/>
</dbReference>
<dbReference type="GO" id="GO:0009231">
    <property type="term" value="P:riboflavin biosynthetic process"/>
    <property type="evidence" value="ECO:0007669"/>
    <property type="project" value="UniProtKB-UniRule"/>
</dbReference>
<dbReference type="FunFam" id="3.90.870.10:FF:000002">
    <property type="entry name" value="3,4-dihydroxy-2-butanone 4-phosphate synthase"/>
    <property type="match status" value="1"/>
</dbReference>
<dbReference type="Gene3D" id="3.90.870.10">
    <property type="entry name" value="DHBP synthase"/>
    <property type="match status" value="1"/>
</dbReference>
<dbReference type="HAMAP" id="MF_00180">
    <property type="entry name" value="RibB"/>
    <property type="match status" value="1"/>
</dbReference>
<dbReference type="InterPro" id="IPR017945">
    <property type="entry name" value="DHBP_synth_RibB-like_a/b_dom"/>
</dbReference>
<dbReference type="InterPro" id="IPR000422">
    <property type="entry name" value="DHBP_synthase_RibB"/>
</dbReference>
<dbReference type="NCBIfam" id="TIGR00506">
    <property type="entry name" value="ribB"/>
    <property type="match status" value="1"/>
</dbReference>
<dbReference type="PANTHER" id="PTHR21327:SF38">
    <property type="entry name" value="3,4-DIHYDROXY-2-BUTANONE 4-PHOSPHATE SYNTHASE"/>
    <property type="match status" value="1"/>
</dbReference>
<dbReference type="PANTHER" id="PTHR21327">
    <property type="entry name" value="GTP CYCLOHYDROLASE II-RELATED"/>
    <property type="match status" value="1"/>
</dbReference>
<dbReference type="Pfam" id="PF00926">
    <property type="entry name" value="DHBP_synthase"/>
    <property type="match status" value="1"/>
</dbReference>
<dbReference type="SUPFAM" id="SSF55821">
    <property type="entry name" value="YrdC/RibB"/>
    <property type="match status" value="1"/>
</dbReference>